<feature type="chain" id="PRO_0000080220" description="Testis-specific chromodomain protein Y 2">
    <location>
        <begin position="1"/>
        <end position="541"/>
    </location>
</feature>
<feature type="domain" description="Chromo" evidence="2">
    <location>
        <begin position="6"/>
        <end position="66"/>
    </location>
</feature>
<feature type="region of interest" description="Disordered" evidence="3">
    <location>
        <begin position="72"/>
        <end position="104"/>
    </location>
</feature>
<feature type="compositionally biased region" description="Polar residues" evidence="3">
    <location>
        <begin position="87"/>
        <end position="97"/>
    </location>
</feature>
<feature type="strand" evidence="4">
    <location>
        <begin position="286"/>
        <end position="292"/>
    </location>
</feature>
<feature type="strand" evidence="4">
    <location>
        <begin position="295"/>
        <end position="300"/>
    </location>
</feature>
<feature type="strand" evidence="4">
    <location>
        <begin position="303"/>
        <end position="306"/>
    </location>
</feature>
<feature type="helix" evidence="4">
    <location>
        <begin position="312"/>
        <end position="327"/>
    </location>
</feature>
<feature type="strand" evidence="4">
    <location>
        <begin position="331"/>
        <end position="337"/>
    </location>
</feature>
<feature type="helix" evidence="4">
    <location>
        <begin position="348"/>
        <end position="357"/>
    </location>
</feature>
<feature type="helix" evidence="4">
    <location>
        <begin position="359"/>
        <end position="379"/>
    </location>
</feature>
<feature type="strand" evidence="4">
    <location>
        <begin position="384"/>
        <end position="388"/>
    </location>
</feature>
<feature type="helix" evidence="4">
    <location>
        <begin position="395"/>
        <end position="398"/>
    </location>
</feature>
<feature type="helix" evidence="4">
    <location>
        <begin position="400"/>
        <end position="402"/>
    </location>
</feature>
<feature type="strand" evidence="4">
    <location>
        <begin position="403"/>
        <end position="409"/>
    </location>
</feature>
<feature type="strand" evidence="4">
    <location>
        <begin position="413"/>
        <end position="415"/>
    </location>
</feature>
<feature type="helix" evidence="4">
    <location>
        <begin position="418"/>
        <end position="421"/>
    </location>
</feature>
<feature type="helix" evidence="4">
    <location>
        <begin position="429"/>
        <end position="437"/>
    </location>
</feature>
<feature type="helix" evidence="4">
    <location>
        <begin position="439"/>
        <end position="446"/>
    </location>
</feature>
<feature type="strand" evidence="4">
    <location>
        <begin position="451"/>
        <end position="453"/>
    </location>
</feature>
<feature type="helix" evidence="4">
    <location>
        <begin position="454"/>
        <end position="459"/>
    </location>
</feature>
<feature type="strand" evidence="4">
    <location>
        <begin position="464"/>
        <end position="467"/>
    </location>
</feature>
<feature type="helix" evidence="4">
    <location>
        <begin position="472"/>
        <end position="483"/>
    </location>
</feature>
<feature type="helix" evidence="4">
    <location>
        <begin position="488"/>
        <end position="521"/>
    </location>
</feature>
<feature type="helix" evidence="4">
    <location>
        <begin position="524"/>
        <end position="535"/>
    </location>
</feature>
<keyword id="KW-0002">3D-structure</keyword>
<keyword id="KW-0012">Acyltransferase</keyword>
<keyword id="KW-0539">Nucleus</keyword>
<keyword id="KW-1185">Reference proteome</keyword>
<keyword id="KW-0808">Transferase</keyword>
<gene>
    <name type="primary">CDY2A</name>
    <name type="synonym">CDY2</name>
</gene>
<gene>
    <name type="primary">CDY2B</name>
</gene>
<sequence>MASQEFEVEAIVDKRQDKNGNTQYLVRWKGYDKQDDTWEPEQHLMNCEKCVHDFNRRQTEKQKKLTWTTTSRIFSNNARRRTSRSTKANYSKNSPKTPVTDKHHRSKNCKLFAASKNVRRKAASTLSDTKNMEIINSTIETLAPDSPFDHKKTVSGFQKLEKLDPIAADQQDTVVFKVTEGKLLRDPLSHPGAEQTGIQNKTQMHPLMSQMSGSVTASMATGSATRKGIVVLIDPLAANGTTDMHTSVPRVKGGQRNITDDSRGQPFIKKMHFTIRLTESAITYRDIVVKKEDGFTQIVLSTRSTEKNALNTEVIKEMVNALNSAAADDSKLVLFSAAGSVFCCGLDFGYFVRHLRNDRNTASLEMVDTIKNFVNTFIQFKKPIVVSVNGPAIGLGASILPLCDLVWANEKAWFQTPYTTFGQSPDGCSSITFPKMMGKASANEMLIAGRKLTAREACAKGLVSQVFLTGTFTQEVMIQIKELASYNAIVLEECKALVRCNIKLELEQANERECEVLRKIWSSAQGIESMLKYVENKIDEF</sequence>
<organism>
    <name type="scientific">Homo sapiens</name>
    <name type="common">Human</name>
    <dbReference type="NCBI Taxonomy" id="9606"/>
    <lineage>
        <taxon>Eukaryota</taxon>
        <taxon>Metazoa</taxon>
        <taxon>Chordata</taxon>
        <taxon>Craniata</taxon>
        <taxon>Vertebrata</taxon>
        <taxon>Euteleostomi</taxon>
        <taxon>Mammalia</taxon>
        <taxon>Eutheria</taxon>
        <taxon>Euarchontoglires</taxon>
        <taxon>Primates</taxon>
        <taxon>Haplorrhini</taxon>
        <taxon>Catarrhini</taxon>
        <taxon>Hominidae</taxon>
        <taxon>Homo</taxon>
    </lineage>
</organism>
<accession>Q9Y6F7</accession>
<accession>A8K868</accession>
<comment type="function">
    <text evidence="1">May have histone acetyltransferase activity.</text>
</comment>
<comment type="catalytic activity">
    <reaction>
        <text>L-lysyl-[protein] + acetyl-CoA = N(6)-acetyl-L-lysyl-[protein] + CoA + H(+)</text>
        <dbReference type="Rhea" id="RHEA:45948"/>
        <dbReference type="Rhea" id="RHEA-COMP:9752"/>
        <dbReference type="Rhea" id="RHEA-COMP:10731"/>
        <dbReference type="ChEBI" id="CHEBI:15378"/>
        <dbReference type="ChEBI" id="CHEBI:29969"/>
        <dbReference type="ChEBI" id="CHEBI:57287"/>
        <dbReference type="ChEBI" id="CHEBI:57288"/>
        <dbReference type="ChEBI" id="CHEBI:61930"/>
        <dbReference type="EC" id="2.3.1.48"/>
    </reaction>
</comment>
<comment type="subcellular location">
    <subcellularLocation>
        <location evidence="1">Nucleus</location>
    </subcellularLocation>
</comment>
<comment type="tissue specificity">
    <text>Testis specific.</text>
</comment>
<evidence type="ECO:0000250" key="1"/>
<evidence type="ECO:0000255" key="2">
    <source>
        <dbReference type="PROSITE-ProRule" id="PRU00053"/>
    </source>
</evidence>
<evidence type="ECO:0000256" key="3">
    <source>
        <dbReference type="SAM" id="MobiDB-lite"/>
    </source>
</evidence>
<evidence type="ECO:0007829" key="4">
    <source>
        <dbReference type="PDB" id="2FW2"/>
    </source>
</evidence>
<protein>
    <recommendedName>
        <fullName>Testis-specific chromodomain protein Y 2</fullName>
        <ecNumber>2.3.1.48</ecNumber>
    </recommendedName>
</protein>
<reference key="1">
    <citation type="journal article" date="1999" name="Nat. Genet.">
        <title>Retroposition of autosomal mRNA yielded testis-specific gene family on human Y chromosome.</title>
        <authorList>
            <person name="Lahn B.T."/>
            <person name="Page D.C."/>
        </authorList>
    </citation>
    <scope>NUCLEOTIDE SEQUENCE [MRNA]</scope>
    <source>
        <tissue>Testis</tissue>
    </source>
</reference>
<reference key="2">
    <citation type="journal article" date="2004" name="Nat. Genet.">
        <title>Complete sequencing and characterization of 21,243 full-length human cDNAs.</title>
        <authorList>
            <person name="Ota T."/>
            <person name="Suzuki Y."/>
            <person name="Nishikawa T."/>
            <person name="Otsuki T."/>
            <person name="Sugiyama T."/>
            <person name="Irie R."/>
            <person name="Wakamatsu A."/>
            <person name="Hayashi K."/>
            <person name="Sato H."/>
            <person name="Nagai K."/>
            <person name="Kimura K."/>
            <person name="Makita H."/>
            <person name="Sekine M."/>
            <person name="Obayashi M."/>
            <person name="Nishi T."/>
            <person name="Shibahara T."/>
            <person name="Tanaka T."/>
            <person name="Ishii S."/>
            <person name="Yamamoto J."/>
            <person name="Saito K."/>
            <person name="Kawai Y."/>
            <person name="Isono Y."/>
            <person name="Nakamura Y."/>
            <person name="Nagahari K."/>
            <person name="Murakami K."/>
            <person name="Yasuda T."/>
            <person name="Iwayanagi T."/>
            <person name="Wagatsuma M."/>
            <person name="Shiratori A."/>
            <person name="Sudo H."/>
            <person name="Hosoiri T."/>
            <person name="Kaku Y."/>
            <person name="Kodaira H."/>
            <person name="Kondo H."/>
            <person name="Sugawara M."/>
            <person name="Takahashi M."/>
            <person name="Kanda K."/>
            <person name="Yokoi T."/>
            <person name="Furuya T."/>
            <person name="Kikkawa E."/>
            <person name="Omura Y."/>
            <person name="Abe K."/>
            <person name="Kamihara K."/>
            <person name="Katsuta N."/>
            <person name="Sato K."/>
            <person name="Tanikawa M."/>
            <person name="Yamazaki M."/>
            <person name="Ninomiya K."/>
            <person name="Ishibashi T."/>
            <person name="Yamashita H."/>
            <person name="Murakawa K."/>
            <person name="Fujimori K."/>
            <person name="Tanai H."/>
            <person name="Kimata M."/>
            <person name="Watanabe M."/>
            <person name="Hiraoka S."/>
            <person name="Chiba Y."/>
            <person name="Ishida S."/>
            <person name="Ono Y."/>
            <person name="Takiguchi S."/>
            <person name="Watanabe S."/>
            <person name="Yosida M."/>
            <person name="Hotuta T."/>
            <person name="Kusano J."/>
            <person name="Kanehori K."/>
            <person name="Takahashi-Fujii A."/>
            <person name="Hara H."/>
            <person name="Tanase T.-O."/>
            <person name="Nomura Y."/>
            <person name="Togiya S."/>
            <person name="Komai F."/>
            <person name="Hara R."/>
            <person name="Takeuchi K."/>
            <person name="Arita M."/>
            <person name="Imose N."/>
            <person name="Musashino K."/>
            <person name="Yuuki H."/>
            <person name="Oshima A."/>
            <person name="Sasaki N."/>
            <person name="Aotsuka S."/>
            <person name="Yoshikawa Y."/>
            <person name="Matsunawa H."/>
            <person name="Ichihara T."/>
            <person name="Shiohata N."/>
            <person name="Sano S."/>
            <person name="Moriya S."/>
            <person name="Momiyama H."/>
            <person name="Satoh N."/>
            <person name="Takami S."/>
            <person name="Terashima Y."/>
            <person name="Suzuki O."/>
            <person name="Nakagawa S."/>
            <person name="Senoh A."/>
            <person name="Mizoguchi H."/>
            <person name="Goto Y."/>
            <person name="Shimizu F."/>
            <person name="Wakebe H."/>
            <person name="Hishigaki H."/>
            <person name="Watanabe T."/>
            <person name="Sugiyama A."/>
            <person name="Takemoto M."/>
            <person name="Kawakami B."/>
            <person name="Yamazaki M."/>
            <person name="Watanabe K."/>
            <person name="Kumagai A."/>
            <person name="Itakura S."/>
            <person name="Fukuzumi Y."/>
            <person name="Fujimori Y."/>
            <person name="Komiyama M."/>
            <person name="Tashiro H."/>
            <person name="Tanigami A."/>
            <person name="Fujiwara T."/>
            <person name="Ono T."/>
            <person name="Yamada K."/>
            <person name="Fujii Y."/>
            <person name="Ozaki K."/>
            <person name="Hirao M."/>
            <person name="Ohmori Y."/>
            <person name="Kawabata A."/>
            <person name="Hikiji T."/>
            <person name="Kobatake N."/>
            <person name="Inagaki H."/>
            <person name="Ikema Y."/>
            <person name="Okamoto S."/>
            <person name="Okitani R."/>
            <person name="Kawakami T."/>
            <person name="Noguchi S."/>
            <person name="Itoh T."/>
            <person name="Shigeta K."/>
            <person name="Senba T."/>
            <person name="Matsumura K."/>
            <person name="Nakajima Y."/>
            <person name="Mizuno T."/>
            <person name="Morinaga M."/>
            <person name="Sasaki M."/>
            <person name="Togashi T."/>
            <person name="Oyama M."/>
            <person name="Hata H."/>
            <person name="Watanabe M."/>
            <person name="Komatsu T."/>
            <person name="Mizushima-Sugano J."/>
            <person name="Satoh T."/>
            <person name="Shirai Y."/>
            <person name="Takahashi Y."/>
            <person name="Nakagawa K."/>
            <person name="Okumura K."/>
            <person name="Nagase T."/>
            <person name="Nomura N."/>
            <person name="Kikuchi H."/>
            <person name="Masuho Y."/>
            <person name="Yamashita R."/>
            <person name="Nakai K."/>
            <person name="Yada T."/>
            <person name="Nakamura Y."/>
            <person name="Ohara O."/>
            <person name="Isogai T."/>
            <person name="Sugano S."/>
        </authorList>
    </citation>
    <scope>NUCLEOTIDE SEQUENCE [LARGE SCALE MRNA]</scope>
    <source>
        <tissue>Testis</tissue>
    </source>
</reference>
<reference key="3">
    <citation type="journal article" date="2004" name="Genome Res.">
        <title>The status, quality, and expansion of the NIH full-length cDNA project: the Mammalian Gene Collection (MGC).</title>
        <authorList>
            <consortium name="The MGC Project Team"/>
        </authorList>
    </citation>
    <scope>NUCLEOTIDE SEQUENCE [LARGE SCALE MRNA]</scope>
</reference>
<reference key="4">
    <citation type="journal article" date="2009" name="Proteins">
        <title>Crystal structures of human CDY proteins reveal a crotonase-like fold.</title>
        <authorList>
            <person name="Wu H."/>
            <person name="Min J."/>
            <person name="Antoshenko T."/>
            <person name="Plotnikov A.N."/>
        </authorList>
    </citation>
    <scope>X-RAY CRYSTALLOGRAPHY (2.2 ANGSTROMS) OF 282-541</scope>
</reference>
<dbReference type="EC" id="2.3.1.48"/>
<dbReference type="EMBL" id="AF080598">
    <property type="protein sequence ID" value="AAD22733.1"/>
    <property type="molecule type" value="mRNA"/>
</dbReference>
<dbReference type="EMBL" id="AK292233">
    <property type="protein sequence ID" value="BAF84922.1"/>
    <property type="molecule type" value="mRNA"/>
</dbReference>
<dbReference type="EMBL" id="BC069087">
    <property type="protein sequence ID" value="AAH69087.1"/>
    <property type="molecule type" value="mRNA"/>
</dbReference>
<dbReference type="CCDS" id="CCDS14789.1"/>
<dbReference type="CCDS" id="CCDS35473.1"/>
<dbReference type="RefSeq" id="NP_001001722.1">
    <property type="nucleotide sequence ID" value="NM_001001722.1"/>
</dbReference>
<dbReference type="RefSeq" id="NP_004816.1">
    <property type="nucleotide sequence ID" value="NM_004825.2"/>
</dbReference>
<dbReference type="PDB" id="2FW2">
    <property type="method" value="X-ray"/>
    <property type="resolution" value="2.20 A"/>
    <property type="chains" value="A/B/C/D/E/F=282-541"/>
</dbReference>
<dbReference type="PDBsum" id="2FW2"/>
<dbReference type="SMR" id="Q9Y6F7"/>
<dbReference type="BioGRID" id="114819">
    <property type="interactions" value="20"/>
</dbReference>
<dbReference type="BioGRID" id="128481">
    <property type="interactions" value="9"/>
</dbReference>
<dbReference type="FunCoup" id="Q9Y6F7">
    <property type="interactions" value="25"/>
</dbReference>
<dbReference type="IntAct" id="Q9Y6F7">
    <property type="interactions" value="9"/>
</dbReference>
<dbReference type="MINT" id="Q9Y6F7"/>
<dbReference type="STRING" id="9606.ENSP00000402280"/>
<dbReference type="iPTMnet" id="Q9Y6F7"/>
<dbReference type="PhosphoSitePlus" id="Q9Y6F7"/>
<dbReference type="BioMuta" id="CDY2A"/>
<dbReference type="DMDM" id="20138088"/>
<dbReference type="jPOST" id="Q9Y6F7"/>
<dbReference type="MassIVE" id="Q9Y6F7"/>
<dbReference type="PeptideAtlas" id="Q9Y6F7"/>
<dbReference type="ProteomicsDB" id="86669"/>
<dbReference type="ABCD" id="Q9Y6F7">
    <property type="antibodies" value="2 sequenced antibodies"/>
</dbReference>
<dbReference type="Antibodypedia" id="21874">
    <property type="antibodies" value="78 antibodies from 11 providers"/>
</dbReference>
<dbReference type="Antibodypedia" id="59758">
    <property type="antibodies" value="34 antibodies from 8 providers"/>
</dbReference>
<dbReference type="DNASU" id="9426"/>
<dbReference type="Ensembl" id="ENST00000250838.6">
    <property type="protein sequence ID" value="ENSP00000250838.4"/>
    <property type="gene ID" value="ENSG00000182415.11"/>
</dbReference>
<dbReference type="Ensembl" id="ENST00000382867.4">
    <property type="protein sequence ID" value="ENSP00000372319.3"/>
    <property type="gene ID" value="ENSG00000129873.8"/>
</dbReference>
<dbReference type="GeneID" id="203611"/>
<dbReference type="GeneID" id="9426"/>
<dbReference type="KEGG" id="hsa:203611"/>
<dbReference type="KEGG" id="hsa:9426"/>
<dbReference type="MANE-Select" id="ENST00000250838.6">
    <property type="protein sequence ID" value="ENSP00000250838.4"/>
    <property type="RefSeq nucleotide sequence ID" value="NM_004825.2"/>
    <property type="RefSeq protein sequence ID" value="NP_004816.1"/>
</dbReference>
<dbReference type="MANE-Select" id="ENST00000382867.4">
    <property type="protein sequence ID" value="ENSP00000372319.3"/>
    <property type="RefSeq nucleotide sequence ID" value="NM_001001722.2"/>
    <property type="RefSeq protein sequence ID" value="NP_001001722.1"/>
</dbReference>
<dbReference type="UCSC" id="uc004ftl.2">
    <property type="organism name" value="human"/>
</dbReference>
<dbReference type="AGR" id="HGNC:1810"/>
<dbReference type="AGR" id="HGNC:23921"/>
<dbReference type="CTD" id="203611"/>
<dbReference type="CTD" id="9426"/>
<dbReference type="DisGeNET" id="203611"/>
<dbReference type="DisGeNET" id="9426"/>
<dbReference type="GeneCards" id="CDY2A"/>
<dbReference type="GeneCards" id="CDY2B"/>
<dbReference type="GeneReviews" id="CDY2A"/>
<dbReference type="HGNC" id="HGNC:1810">
    <property type="gene designation" value="CDY2A"/>
</dbReference>
<dbReference type="HGNC" id="HGNC:23921">
    <property type="gene designation" value="CDY2B"/>
</dbReference>
<dbReference type="HPA" id="ENSG00000129873">
    <property type="expression patterns" value="Not detected"/>
</dbReference>
<dbReference type="HPA" id="ENSG00000182415">
    <property type="expression patterns" value="Group enriched (epididymis, testis)"/>
</dbReference>
<dbReference type="MIM" id="400018">
    <property type="type" value="gene"/>
</dbReference>
<dbReference type="neXtProt" id="NX_Q9Y6F7"/>
<dbReference type="OpenTargets" id="ENSG00000129873"/>
<dbReference type="PharmGKB" id="PA26355"/>
<dbReference type="VEuPathDB" id="HostDB:ENSG00000129873"/>
<dbReference type="VEuPathDB" id="HostDB:ENSG00000182415"/>
<dbReference type="GeneTree" id="ENSGT00940000155106"/>
<dbReference type="HOGENOM" id="CLU_009834_24_0_1"/>
<dbReference type="InParanoid" id="Q9Y6F7"/>
<dbReference type="PAN-GO" id="Q9Y6F7">
    <property type="GO annotations" value="2 GO annotations based on evolutionary models"/>
</dbReference>
<dbReference type="PhylomeDB" id="Q9Y6F7"/>
<dbReference type="TreeFam" id="TF313375"/>
<dbReference type="PathwayCommons" id="Q9Y6F7"/>
<dbReference type="SignaLink" id="Q9Y6F7"/>
<dbReference type="BioGRID-ORCS" id="203611">
    <property type="hits" value="7 hits in 621 CRISPR screens"/>
</dbReference>
<dbReference type="BioGRID-ORCS" id="9426">
    <property type="hits" value="4 hits in 275 CRISPR screens"/>
</dbReference>
<dbReference type="EvolutionaryTrace" id="Q9Y6F7"/>
<dbReference type="Pharos" id="Q9Y6F7">
    <property type="development level" value="Tdark"/>
</dbReference>
<dbReference type="PRO" id="PR:Q9Y6F7"/>
<dbReference type="Proteomes" id="UP000005640">
    <property type="component" value="Chromosome Y"/>
</dbReference>
<dbReference type="RNAct" id="Q9Y6F7">
    <property type="molecule type" value="protein"/>
</dbReference>
<dbReference type="Bgee" id="ENSG00000129873">
    <property type="expression patterns" value="Expressed in left testis and 1 other cell type or tissue"/>
</dbReference>
<dbReference type="GO" id="GO:0005634">
    <property type="term" value="C:nucleus"/>
    <property type="evidence" value="ECO:0000318"/>
    <property type="project" value="GO_Central"/>
</dbReference>
<dbReference type="GO" id="GO:0004402">
    <property type="term" value="F:histone acetyltransferase activity"/>
    <property type="evidence" value="ECO:0007669"/>
    <property type="project" value="UniProtKB-EC"/>
</dbReference>
<dbReference type="GO" id="GO:0003714">
    <property type="term" value="F:transcription corepressor activity"/>
    <property type="evidence" value="ECO:0000318"/>
    <property type="project" value="GO_Central"/>
</dbReference>
<dbReference type="GO" id="GO:0007283">
    <property type="term" value="P:spermatogenesis"/>
    <property type="evidence" value="ECO:0000304"/>
    <property type="project" value="ProtInc"/>
</dbReference>
<dbReference type="CDD" id="cd18634">
    <property type="entry name" value="CD_CDY"/>
    <property type="match status" value="1"/>
</dbReference>
<dbReference type="CDD" id="cd06558">
    <property type="entry name" value="crotonase-like"/>
    <property type="match status" value="1"/>
</dbReference>
<dbReference type="FunFam" id="1.10.12.10:FF:000006">
    <property type="entry name" value="Chromodomain Y-like protein"/>
    <property type="match status" value="1"/>
</dbReference>
<dbReference type="FunFam" id="3.90.226.10:FF:000012">
    <property type="entry name" value="Chromodomain Y-like protein 2"/>
    <property type="match status" value="1"/>
</dbReference>
<dbReference type="FunFam" id="2.40.50.40:FF:000043">
    <property type="entry name" value="Testis-specific chromodomain protein Y 2"/>
    <property type="match status" value="1"/>
</dbReference>
<dbReference type="Gene3D" id="2.40.50.40">
    <property type="match status" value="1"/>
</dbReference>
<dbReference type="Gene3D" id="3.90.226.10">
    <property type="entry name" value="2-enoyl-CoA Hydratase, Chain A, domain 1"/>
    <property type="match status" value="1"/>
</dbReference>
<dbReference type="Gene3D" id="1.10.12.10">
    <property type="entry name" value="Lyase 2-enoyl-coa Hydratase, Chain A, domain 2"/>
    <property type="match status" value="1"/>
</dbReference>
<dbReference type="InterPro" id="IPR016197">
    <property type="entry name" value="Chromo-like_dom_sf"/>
</dbReference>
<dbReference type="InterPro" id="IPR000953">
    <property type="entry name" value="Chromo/chromo_shadow_dom"/>
</dbReference>
<dbReference type="InterPro" id="IPR017984">
    <property type="entry name" value="Chromo_dom_subgr"/>
</dbReference>
<dbReference type="InterPro" id="IPR023780">
    <property type="entry name" value="Chromo_domain"/>
</dbReference>
<dbReference type="InterPro" id="IPR023779">
    <property type="entry name" value="Chromodomain_CS"/>
</dbReference>
<dbReference type="InterPro" id="IPR029045">
    <property type="entry name" value="ClpP/crotonase-like_dom_sf"/>
</dbReference>
<dbReference type="InterPro" id="IPR051053">
    <property type="entry name" value="ECH/Chromodomain_protein"/>
</dbReference>
<dbReference type="InterPro" id="IPR001753">
    <property type="entry name" value="Enoyl-CoA_hydra/iso"/>
</dbReference>
<dbReference type="InterPro" id="IPR014748">
    <property type="entry name" value="Enoyl-CoA_hydra_C"/>
</dbReference>
<dbReference type="PANTHER" id="PTHR43684">
    <property type="match status" value="1"/>
</dbReference>
<dbReference type="PANTHER" id="PTHR43684:SF6">
    <property type="entry name" value="TESTIS-SPECIFIC CHROMODOMAIN PROTEIN Y 1-RELATED"/>
    <property type="match status" value="1"/>
</dbReference>
<dbReference type="Pfam" id="PF00385">
    <property type="entry name" value="Chromo"/>
    <property type="match status" value="1"/>
</dbReference>
<dbReference type="Pfam" id="PF00378">
    <property type="entry name" value="ECH_1"/>
    <property type="match status" value="1"/>
</dbReference>
<dbReference type="PRINTS" id="PR00504">
    <property type="entry name" value="CHROMODOMAIN"/>
</dbReference>
<dbReference type="SMART" id="SM00298">
    <property type="entry name" value="CHROMO"/>
    <property type="match status" value="1"/>
</dbReference>
<dbReference type="SUPFAM" id="SSF54160">
    <property type="entry name" value="Chromo domain-like"/>
    <property type="match status" value="1"/>
</dbReference>
<dbReference type="SUPFAM" id="SSF52096">
    <property type="entry name" value="ClpP/crotonase"/>
    <property type="match status" value="1"/>
</dbReference>
<dbReference type="PROSITE" id="PS00598">
    <property type="entry name" value="CHROMO_1"/>
    <property type="match status" value="1"/>
</dbReference>
<dbReference type="PROSITE" id="PS50013">
    <property type="entry name" value="CHROMO_2"/>
    <property type="match status" value="1"/>
</dbReference>
<proteinExistence type="evidence at protein level"/>
<name>CDY2_HUMAN</name>